<proteinExistence type="inferred from homology"/>
<organism>
    <name type="scientific">Nocardioides sp. (strain ATCC BAA-499 / JS614)</name>
    <dbReference type="NCBI Taxonomy" id="196162"/>
    <lineage>
        <taxon>Bacteria</taxon>
        <taxon>Bacillati</taxon>
        <taxon>Actinomycetota</taxon>
        <taxon>Actinomycetes</taxon>
        <taxon>Propionibacteriales</taxon>
        <taxon>Nocardioidaceae</taxon>
        <taxon>Nocardioides</taxon>
    </lineage>
</organism>
<evidence type="ECO:0000250" key="1"/>
<evidence type="ECO:0000255" key="2">
    <source>
        <dbReference type="HAMAP-Rule" id="MF_00403"/>
    </source>
</evidence>
<evidence type="ECO:0000256" key="3">
    <source>
        <dbReference type="SAM" id="MobiDB-lite"/>
    </source>
</evidence>
<evidence type="ECO:0000305" key="4"/>
<keyword id="KW-0488">Methylation</keyword>
<keyword id="KW-1185">Reference proteome</keyword>
<keyword id="KW-0687">Ribonucleoprotein</keyword>
<keyword id="KW-0689">Ribosomal protein</keyword>
<keyword id="KW-0694">RNA-binding</keyword>
<keyword id="KW-0699">rRNA-binding</keyword>
<keyword id="KW-0820">tRNA-binding</keyword>
<accession>A1SNN8</accession>
<protein>
    <recommendedName>
        <fullName evidence="2">Small ribosomal subunit protein uS12</fullName>
    </recommendedName>
    <alternativeName>
        <fullName evidence="4">30S ribosomal protein S12</fullName>
    </alternativeName>
</protein>
<feature type="chain" id="PRO_0000296007" description="Small ribosomal subunit protein uS12">
    <location>
        <begin position="1"/>
        <end position="124"/>
    </location>
</feature>
<feature type="region of interest" description="Disordered" evidence="3">
    <location>
        <begin position="1"/>
        <end position="32"/>
    </location>
</feature>
<feature type="modified residue" description="3-methylthioaspartic acid" evidence="1">
    <location>
        <position position="89"/>
    </location>
</feature>
<dbReference type="EMBL" id="CP000509">
    <property type="protein sequence ID" value="ABL83423.1"/>
    <property type="molecule type" value="Genomic_DNA"/>
</dbReference>
<dbReference type="RefSeq" id="WP_011757353.1">
    <property type="nucleotide sequence ID" value="NC_008699.1"/>
</dbReference>
<dbReference type="SMR" id="A1SNN8"/>
<dbReference type="STRING" id="196162.Noca_3925"/>
<dbReference type="KEGG" id="nca:Noca_3925"/>
<dbReference type="eggNOG" id="COG0048">
    <property type="taxonomic scope" value="Bacteria"/>
</dbReference>
<dbReference type="HOGENOM" id="CLU_104295_1_2_11"/>
<dbReference type="OrthoDB" id="9802366at2"/>
<dbReference type="Proteomes" id="UP000000640">
    <property type="component" value="Chromosome"/>
</dbReference>
<dbReference type="GO" id="GO:0015935">
    <property type="term" value="C:small ribosomal subunit"/>
    <property type="evidence" value="ECO:0007669"/>
    <property type="project" value="InterPro"/>
</dbReference>
<dbReference type="GO" id="GO:0019843">
    <property type="term" value="F:rRNA binding"/>
    <property type="evidence" value="ECO:0007669"/>
    <property type="project" value="UniProtKB-UniRule"/>
</dbReference>
<dbReference type="GO" id="GO:0003735">
    <property type="term" value="F:structural constituent of ribosome"/>
    <property type="evidence" value="ECO:0007669"/>
    <property type="project" value="InterPro"/>
</dbReference>
<dbReference type="GO" id="GO:0000049">
    <property type="term" value="F:tRNA binding"/>
    <property type="evidence" value="ECO:0007669"/>
    <property type="project" value="UniProtKB-UniRule"/>
</dbReference>
<dbReference type="GO" id="GO:0006412">
    <property type="term" value="P:translation"/>
    <property type="evidence" value="ECO:0007669"/>
    <property type="project" value="UniProtKB-UniRule"/>
</dbReference>
<dbReference type="CDD" id="cd03368">
    <property type="entry name" value="Ribosomal_S12"/>
    <property type="match status" value="1"/>
</dbReference>
<dbReference type="FunFam" id="2.40.50.140:FF:000001">
    <property type="entry name" value="30S ribosomal protein S12"/>
    <property type="match status" value="1"/>
</dbReference>
<dbReference type="Gene3D" id="2.40.50.140">
    <property type="entry name" value="Nucleic acid-binding proteins"/>
    <property type="match status" value="1"/>
</dbReference>
<dbReference type="HAMAP" id="MF_00403_B">
    <property type="entry name" value="Ribosomal_uS12_B"/>
    <property type="match status" value="1"/>
</dbReference>
<dbReference type="InterPro" id="IPR012340">
    <property type="entry name" value="NA-bd_OB-fold"/>
</dbReference>
<dbReference type="InterPro" id="IPR006032">
    <property type="entry name" value="Ribosomal_uS12"/>
</dbReference>
<dbReference type="InterPro" id="IPR005679">
    <property type="entry name" value="Ribosomal_uS12_bac"/>
</dbReference>
<dbReference type="NCBIfam" id="TIGR00981">
    <property type="entry name" value="rpsL_bact"/>
    <property type="match status" value="1"/>
</dbReference>
<dbReference type="PANTHER" id="PTHR11652">
    <property type="entry name" value="30S RIBOSOMAL PROTEIN S12 FAMILY MEMBER"/>
    <property type="match status" value="1"/>
</dbReference>
<dbReference type="Pfam" id="PF00164">
    <property type="entry name" value="Ribosom_S12_S23"/>
    <property type="match status" value="1"/>
</dbReference>
<dbReference type="PIRSF" id="PIRSF002133">
    <property type="entry name" value="Ribosomal_S12/S23"/>
    <property type="match status" value="1"/>
</dbReference>
<dbReference type="PRINTS" id="PR01034">
    <property type="entry name" value="RIBOSOMALS12"/>
</dbReference>
<dbReference type="SUPFAM" id="SSF50249">
    <property type="entry name" value="Nucleic acid-binding proteins"/>
    <property type="match status" value="1"/>
</dbReference>
<dbReference type="PROSITE" id="PS00055">
    <property type="entry name" value="RIBOSOMAL_S12"/>
    <property type="match status" value="1"/>
</dbReference>
<name>RS12_NOCSJ</name>
<reference key="1">
    <citation type="submission" date="2006-12" db="EMBL/GenBank/DDBJ databases">
        <title>Complete sequence of chromosome 1 of Nocardioides sp. JS614.</title>
        <authorList>
            <person name="Copeland A."/>
            <person name="Lucas S."/>
            <person name="Lapidus A."/>
            <person name="Barry K."/>
            <person name="Detter J.C."/>
            <person name="Glavina del Rio T."/>
            <person name="Hammon N."/>
            <person name="Israni S."/>
            <person name="Dalin E."/>
            <person name="Tice H."/>
            <person name="Pitluck S."/>
            <person name="Thompson L.S."/>
            <person name="Brettin T."/>
            <person name="Bruce D."/>
            <person name="Han C."/>
            <person name="Tapia R."/>
            <person name="Schmutz J."/>
            <person name="Larimer F."/>
            <person name="Land M."/>
            <person name="Hauser L."/>
            <person name="Kyrpides N."/>
            <person name="Kim E."/>
            <person name="Mattes T."/>
            <person name="Gossett J."/>
            <person name="Richardson P."/>
        </authorList>
    </citation>
    <scope>NUCLEOTIDE SEQUENCE [LARGE SCALE GENOMIC DNA]</scope>
    <source>
        <strain>ATCC BAA-499 / JS614</strain>
    </source>
</reference>
<sequence>MPTIQQLVRKGRQDKVSKNKTPALKGSPQRRGVCTRVYTTTPKKPNSALRKVARVRLSSGVEVTAYIPGVGHNLQEHSIVLVRGGRVKDLPGVRYKIIRGTLDTQGVKNRKQARSRYGAKKEKS</sequence>
<gene>
    <name evidence="2" type="primary">rpsL</name>
    <name type="ordered locus">Noca_3925</name>
</gene>
<comment type="function">
    <text evidence="2">With S4 and S5 plays an important role in translational accuracy.</text>
</comment>
<comment type="function">
    <text evidence="2">Interacts with and stabilizes bases of the 16S rRNA that are involved in tRNA selection in the A site and with the mRNA backbone. Located at the interface of the 30S and 50S subunits, it traverses the body of the 30S subunit contacting proteins on the other side and probably holding the rRNA structure together. The combined cluster of proteins S8, S12 and S17 appears to hold together the shoulder and platform of the 30S subunit.</text>
</comment>
<comment type="subunit">
    <text evidence="2">Part of the 30S ribosomal subunit. Contacts proteins S8 and S17. May interact with IF1 in the 30S initiation complex.</text>
</comment>
<comment type="similarity">
    <text evidence="2">Belongs to the universal ribosomal protein uS12 family.</text>
</comment>